<evidence type="ECO:0000255" key="1">
    <source>
        <dbReference type="PROSITE-ProRule" id="PRU00441"/>
    </source>
</evidence>
<evidence type="ECO:0000305" key="2"/>
<feature type="chain" id="PRO_0000284085" description="Probable ABC transporter permease protein BruAb2_1124">
    <location>
        <begin position="1"/>
        <end position="250"/>
    </location>
</feature>
<feature type="transmembrane region" description="Helical" evidence="1">
    <location>
        <begin position="12"/>
        <end position="32"/>
    </location>
</feature>
<feature type="transmembrane region" description="Helical" evidence="1">
    <location>
        <begin position="63"/>
        <end position="83"/>
    </location>
</feature>
<feature type="transmembrane region" description="Helical" evidence="1">
    <location>
        <begin position="94"/>
        <end position="114"/>
    </location>
</feature>
<feature type="transmembrane region" description="Helical" evidence="1">
    <location>
        <begin position="122"/>
        <end position="142"/>
    </location>
</feature>
<feature type="transmembrane region" description="Helical" evidence="1">
    <location>
        <begin position="172"/>
        <end position="192"/>
    </location>
</feature>
<feature type="transmembrane region" description="Helical" evidence="1">
    <location>
        <begin position="211"/>
        <end position="231"/>
    </location>
</feature>
<feature type="domain" description="ABC transmembrane type-1" evidence="1">
    <location>
        <begin position="56"/>
        <end position="236"/>
    </location>
</feature>
<comment type="function">
    <text evidence="2">Probably part of an ABC transporter complex. Probably responsible for the translocation of the substrate across the membrane (Probable).</text>
</comment>
<comment type="subunit">
    <text evidence="2">The complex is composed of two ATP-binding proteins (BruAb2_1123), two transmembrane proteins (BruAb2_1124) and a solute-binding protein (BruAb2_1122).</text>
</comment>
<comment type="subcellular location">
    <subcellularLocation>
        <location evidence="2">Cell inner membrane</location>
        <topology evidence="1">Multi-pass membrane protein</topology>
    </subcellularLocation>
</comment>
<comment type="similarity">
    <text evidence="2">Belongs to the binding-protein-dependent transport system permease family.</text>
</comment>
<protein>
    <recommendedName>
        <fullName>Probable ABC transporter permease protein BruAb2_1124</fullName>
    </recommendedName>
</protein>
<organism>
    <name type="scientific">Brucella abortus biovar 1 (strain 9-941)</name>
    <dbReference type="NCBI Taxonomy" id="262698"/>
    <lineage>
        <taxon>Bacteria</taxon>
        <taxon>Pseudomonadati</taxon>
        <taxon>Pseudomonadota</taxon>
        <taxon>Alphaproteobacteria</taxon>
        <taxon>Hyphomicrobiales</taxon>
        <taxon>Brucellaceae</taxon>
        <taxon>Brucella/Ochrobactrum group</taxon>
        <taxon>Brucella</taxon>
    </lineage>
</organism>
<gene>
    <name type="ordered locus">BruAb2_1124</name>
</gene>
<sequence length="250" mass="26895">MNARLTGLGLNLLSFAVGIGGWYLLTATGAVVLPGPVDVLERAVTLLLNGQLVGDIFASLRRVLSGFVLGVALAIPVGFLMGWYRIARSLIEPWVQFFRMIPPLAVIPLAIVTLGIDESPKIFVIFLASFLSSVVATYQGVISVDRTLINAARVLGAKDATIFARVIVPASVPFILVGVRIGLGSAWATVVAAELIAAQSGLGYRMQQAQLYYDLPTIFVSLVTIGILGLFMDRLLQAADRRLTQWQERA</sequence>
<keyword id="KW-0997">Cell inner membrane</keyword>
<keyword id="KW-1003">Cell membrane</keyword>
<keyword id="KW-0472">Membrane</keyword>
<keyword id="KW-0812">Transmembrane</keyword>
<keyword id="KW-1133">Transmembrane helix</keyword>
<keyword id="KW-0813">Transport</keyword>
<accession>Q576D9</accession>
<reference key="1">
    <citation type="journal article" date="2005" name="J. Bacteriol.">
        <title>Completion of the genome sequence of Brucella abortus and comparison to the highly similar genomes of Brucella melitensis and Brucella suis.</title>
        <authorList>
            <person name="Halling S.M."/>
            <person name="Peterson-Burch B.D."/>
            <person name="Bricker B.J."/>
            <person name="Zuerner R.L."/>
            <person name="Qing Z."/>
            <person name="Li L.-L."/>
            <person name="Kapur V."/>
            <person name="Alt D.P."/>
            <person name="Olsen S.C."/>
        </authorList>
    </citation>
    <scope>NUCLEOTIDE SEQUENCE [LARGE SCALE GENOMIC DNA]</scope>
    <source>
        <strain>9-941</strain>
    </source>
</reference>
<proteinExistence type="inferred from homology"/>
<name>Y3424_BRUAB</name>
<dbReference type="EMBL" id="AE017224">
    <property type="protein sequence ID" value="AAX76495.1"/>
    <property type="molecule type" value="Genomic_DNA"/>
</dbReference>
<dbReference type="RefSeq" id="WP_002967148.1">
    <property type="nucleotide sequence ID" value="NC_006933.1"/>
</dbReference>
<dbReference type="SMR" id="Q576D9"/>
<dbReference type="EnsemblBacteria" id="AAX76495">
    <property type="protein sequence ID" value="AAX76495"/>
    <property type="gene ID" value="BruAb2_1124"/>
</dbReference>
<dbReference type="KEGG" id="bmb:BruAb2_1124"/>
<dbReference type="HOGENOM" id="CLU_046113_1_0_5"/>
<dbReference type="Proteomes" id="UP000000540">
    <property type="component" value="Chromosome II"/>
</dbReference>
<dbReference type="GO" id="GO:0005886">
    <property type="term" value="C:plasma membrane"/>
    <property type="evidence" value="ECO:0007669"/>
    <property type="project" value="UniProtKB-SubCell"/>
</dbReference>
<dbReference type="GO" id="GO:0055085">
    <property type="term" value="P:transmembrane transport"/>
    <property type="evidence" value="ECO:0007669"/>
    <property type="project" value="InterPro"/>
</dbReference>
<dbReference type="CDD" id="cd06261">
    <property type="entry name" value="TM_PBP2"/>
    <property type="match status" value="1"/>
</dbReference>
<dbReference type="FunFam" id="1.10.3720.10:FF:000003">
    <property type="entry name" value="Aliphatic sulfonate ABC transporter permease"/>
    <property type="match status" value="1"/>
</dbReference>
<dbReference type="Gene3D" id="1.10.3720.10">
    <property type="entry name" value="MetI-like"/>
    <property type="match status" value="1"/>
</dbReference>
<dbReference type="InterPro" id="IPR000515">
    <property type="entry name" value="MetI-like"/>
</dbReference>
<dbReference type="InterPro" id="IPR035906">
    <property type="entry name" value="MetI-like_sf"/>
</dbReference>
<dbReference type="PANTHER" id="PTHR30151:SF0">
    <property type="entry name" value="ABC TRANSPORTER PERMEASE PROTEIN MJ0413-RELATED"/>
    <property type="match status" value="1"/>
</dbReference>
<dbReference type="PANTHER" id="PTHR30151">
    <property type="entry name" value="ALKANE SULFONATE ABC TRANSPORTER-RELATED, MEMBRANE SUBUNIT"/>
    <property type="match status" value="1"/>
</dbReference>
<dbReference type="Pfam" id="PF00528">
    <property type="entry name" value="BPD_transp_1"/>
    <property type="match status" value="1"/>
</dbReference>
<dbReference type="SUPFAM" id="SSF161098">
    <property type="entry name" value="MetI-like"/>
    <property type="match status" value="1"/>
</dbReference>
<dbReference type="PROSITE" id="PS50928">
    <property type="entry name" value="ABC_TM1"/>
    <property type="match status" value="1"/>
</dbReference>